<dbReference type="EC" id="3.4.19.12" evidence="1"/>
<dbReference type="EMBL" id="AB169252">
    <property type="protein sequence ID" value="BAE01342.1"/>
    <property type="molecule type" value="mRNA"/>
</dbReference>
<dbReference type="RefSeq" id="NP_001270928.1">
    <property type="nucleotide sequence ID" value="NM_001283999.1"/>
</dbReference>
<dbReference type="RefSeq" id="XP_045251381.2">
    <property type="nucleotide sequence ID" value="XM_045395446.2"/>
</dbReference>
<dbReference type="SMR" id="Q4R6D3"/>
<dbReference type="STRING" id="9541.ENSMFAP00000024469"/>
<dbReference type="MEROPS" id="C19.058"/>
<dbReference type="GeneID" id="101865081"/>
<dbReference type="VEuPathDB" id="HostDB:ENSMFAG00000043824"/>
<dbReference type="eggNOG" id="KOG1868">
    <property type="taxonomic scope" value="Eukaryota"/>
</dbReference>
<dbReference type="OMA" id="ECTDHYD"/>
<dbReference type="Proteomes" id="UP000233100">
    <property type="component" value="Chromosome 7"/>
</dbReference>
<dbReference type="GO" id="GO:0005813">
    <property type="term" value="C:centrosome"/>
    <property type="evidence" value="ECO:0000250"/>
    <property type="project" value="UniProtKB"/>
</dbReference>
<dbReference type="GO" id="GO:0005737">
    <property type="term" value="C:cytoplasm"/>
    <property type="evidence" value="ECO:0000250"/>
    <property type="project" value="UniProtKB"/>
</dbReference>
<dbReference type="GO" id="GO:0005634">
    <property type="term" value="C:nucleus"/>
    <property type="evidence" value="ECO:0000250"/>
    <property type="project" value="UniProtKB"/>
</dbReference>
<dbReference type="GO" id="GO:0004843">
    <property type="term" value="F:cysteine-type deubiquitinase activity"/>
    <property type="evidence" value="ECO:0000250"/>
    <property type="project" value="UniProtKB"/>
</dbReference>
<dbReference type="GO" id="GO:0016579">
    <property type="term" value="P:protein deubiquitination"/>
    <property type="evidence" value="ECO:0007669"/>
    <property type="project" value="InterPro"/>
</dbReference>
<dbReference type="GO" id="GO:0006508">
    <property type="term" value="P:proteolysis"/>
    <property type="evidence" value="ECO:0007669"/>
    <property type="project" value="UniProtKB-KW"/>
</dbReference>
<dbReference type="GO" id="GO:1902749">
    <property type="term" value="P:regulation of cell cycle G2/M phase transition"/>
    <property type="evidence" value="ECO:0000250"/>
    <property type="project" value="UniProtKB"/>
</dbReference>
<dbReference type="CDD" id="cd02674">
    <property type="entry name" value="Peptidase_C19R"/>
    <property type="match status" value="1"/>
</dbReference>
<dbReference type="FunFam" id="3.90.70.10:FF:000084">
    <property type="entry name" value="inactive ubiquitin carboxyl-terminal hydrolase 50"/>
    <property type="match status" value="1"/>
</dbReference>
<dbReference type="Gene3D" id="3.90.70.10">
    <property type="entry name" value="Cysteine proteinases"/>
    <property type="match status" value="1"/>
</dbReference>
<dbReference type="InterPro" id="IPR038765">
    <property type="entry name" value="Papain-like_cys_pep_sf"/>
</dbReference>
<dbReference type="InterPro" id="IPR001394">
    <property type="entry name" value="Peptidase_C19_UCH"/>
</dbReference>
<dbReference type="InterPro" id="IPR050185">
    <property type="entry name" value="Ub_carboxyl-term_hydrolase"/>
</dbReference>
<dbReference type="InterPro" id="IPR018200">
    <property type="entry name" value="USP_CS"/>
</dbReference>
<dbReference type="InterPro" id="IPR028889">
    <property type="entry name" value="USP_dom"/>
</dbReference>
<dbReference type="PANTHER" id="PTHR21646:SF11">
    <property type="entry name" value="INACTIVE UBIQUITIN CARBOXYL-TERMINAL HYDROLASE 50"/>
    <property type="match status" value="1"/>
</dbReference>
<dbReference type="PANTHER" id="PTHR21646">
    <property type="entry name" value="UBIQUITIN CARBOXYL-TERMINAL HYDROLASE"/>
    <property type="match status" value="1"/>
</dbReference>
<dbReference type="Pfam" id="PF00443">
    <property type="entry name" value="UCH"/>
    <property type="match status" value="1"/>
</dbReference>
<dbReference type="SUPFAM" id="SSF54001">
    <property type="entry name" value="Cysteine proteinases"/>
    <property type="match status" value="1"/>
</dbReference>
<dbReference type="PROSITE" id="PS00972">
    <property type="entry name" value="USP_1"/>
    <property type="match status" value="1"/>
</dbReference>
<dbReference type="PROSITE" id="PS00973">
    <property type="entry name" value="USP_2"/>
    <property type="match status" value="1"/>
</dbReference>
<dbReference type="PROSITE" id="PS50235">
    <property type="entry name" value="USP_3"/>
    <property type="match status" value="1"/>
</dbReference>
<gene>
    <name type="primary">USP50</name>
    <name type="ORF">QtsA-18237</name>
</gene>
<feature type="chain" id="PRO_0000249528" description="Ubiquitin carboxyl-terminal hydrolase 50">
    <location>
        <begin position="1"/>
        <end position="373"/>
    </location>
</feature>
<feature type="domain" description="USP">
    <location>
        <begin position="44"/>
        <end position="364"/>
    </location>
</feature>
<feature type="active site" description="Nucleophile" evidence="2 3">
    <location>
        <position position="53"/>
    </location>
</feature>
<feature type="active site" description="Proton acceptor" evidence="2 3">
    <location>
        <position position="322"/>
    </location>
</feature>
<sequence>MTSQRSLPADDFGIYYVLAECTDYYDTLPVKEADGSQPCSQGVTGLRNLGNTCYMNAILQCLCSISPLVEYFLSGKYITALQNDCSEVATAFAYLMTDMWLGDSDCVSPEIFRSALGNLYPAFTKKTQQDAQEFLIYVLNELHEALKKYHYPRRRSHEKGSAQRCCRKWITTETSVITQLFEGQLNYSIVCLKCEKCTYKNEVFTVLSLPIPSEYECSLQDCLQCFFQQDTLTWNNQIHCSFCETKQETAVRAGISKAPKIIIFHLKRFDIQGTTKRKLRTDIHYPLTNLDLTPYICPIFRKYPKYNLCAVVNHFGDLDGGHYTAFCKNSFTQAWYSFDDTRVSEIPDTSVQNATAYLLFYSCQPFSIPIQKH</sequence>
<reference key="1">
    <citation type="submission" date="2005-06" db="EMBL/GenBank/DDBJ databases">
        <title>DNA sequences of macaque genes expressed in brain or testis and its evolutionary implications.</title>
        <authorList>
            <consortium name="International consortium for macaque cDNA sequencing and analysis"/>
        </authorList>
    </citation>
    <scope>NUCLEOTIDE SEQUENCE [LARGE SCALE MRNA]</scope>
    <source>
        <tissue>Testis</tissue>
    </source>
</reference>
<accession>Q4R6D3</accession>
<name>UBP50_MACFA</name>
<organism>
    <name type="scientific">Macaca fascicularis</name>
    <name type="common">Crab-eating macaque</name>
    <name type="synonym">Cynomolgus monkey</name>
    <dbReference type="NCBI Taxonomy" id="9541"/>
    <lineage>
        <taxon>Eukaryota</taxon>
        <taxon>Metazoa</taxon>
        <taxon>Chordata</taxon>
        <taxon>Craniata</taxon>
        <taxon>Vertebrata</taxon>
        <taxon>Euteleostomi</taxon>
        <taxon>Mammalia</taxon>
        <taxon>Eutheria</taxon>
        <taxon>Euarchontoglires</taxon>
        <taxon>Primates</taxon>
        <taxon>Haplorrhini</taxon>
        <taxon>Catarrhini</taxon>
        <taxon>Cercopithecidae</taxon>
        <taxon>Cercopithecinae</taxon>
        <taxon>Macaca</taxon>
    </lineage>
</organism>
<protein>
    <recommendedName>
        <fullName>Ubiquitin carboxyl-terminal hydrolase 50</fullName>
        <ecNumber evidence="1">3.4.19.12</ecNumber>
    </recommendedName>
    <alternativeName>
        <fullName>Deubiquitinating enzyme 50</fullName>
    </alternativeName>
    <alternativeName>
        <fullName>Ubiquitin thioesterase 50</fullName>
    </alternativeName>
    <alternativeName>
        <fullName>Ubiquitin-specific-processing protease 50</fullName>
    </alternativeName>
</protein>
<comment type="function">
    <text evidence="1">Deubiquitinating enzyme that removes conjugated ubiquitin from specific proteins to regulate different cellular processes. Regulates the inflammasome signaling pathway by deubiquitinating 'Lys-63'-linked polyubiquitination of the PYCARD/ASC adapter protein. Regulates the ubiquitination and stability of the ACE2 protein. Acts as a negative regulator of the G2/M checkpoint pathway, by preventing serine/threonine kinase WEE1 degradation, thereby repressing entry into mitosis following activation of the G2/M DNA damage checkpoint.</text>
</comment>
<comment type="catalytic activity">
    <reaction evidence="1">
        <text>Thiol-dependent hydrolysis of ester, thioester, amide, peptide and isopeptide bonds formed by the C-terminal Gly of ubiquitin (a 76-residue protein attached to proteins as an intracellular targeting signal).</text>
        <dbReference type="EC" id="3.4.19.12"/>
    </reaction>
</comment>
<comment type="subcellular location">
    <subcellularLocation>
        <location evidence="1">Cytoplasm</location>
    </subcellularLocation>
    <subcellularLocation>
        <location evidence="1">Cytoplasm</location>
        <location evidence="1">Cytoskeleton</location>
        <location evidence="1">Microtubule organizing center</location>
        <location evidence="1">Centrosome</location>
    </subcellularLocation>
    <subcellularLocation>
        <location evidence="1">Nucleus</location>
    </subcellularLocation>
    <text evidence="1">Accumulates in the nucleus following DNA injury.</text>
</comment>
<comment type="miscellaneous">
    <text>The human ortholog is inactive.</text>
</comment>
<comment type="similarity">
    <text evidence="4">Belongs to the peptidase C19 family.</text>
</comment>
<proteinExistence type="evidence at transcript level"/>
<evidence type="ECO:0000250" key="1">
    <source>
        <dbReference type="UniProtKB" id="Q70EL3"/>
    </source>
</evidence>
<evidence type="ECO:0000255" key="2">
    <source>
        <dbReference type="PROSITE-ProRule" id="PRU10092"/>
    </source>
</evidence>
<evidence type="ECO:0000255" key="3">
    <source>
        <dbReference type="PROSITE-ProRule" id="PRU10093"/>
    </source>
</evidence>
<evidence type="ECO:0000305" key="4"/>
<keyword id="KW-0131">Cell cycle</keyword>
<keyword id="KW-0963">Cytoplasm</keyword>
<keyword id="KW-0206">Cytoskeleton</keyword>
<keyword id="KW-0378">Hydrolase</keyword>
<keyword id="KW-0539">Nucleus</keyword>
<keyword id="KW-0645">Protease</keyword>
<keyword id="KW-1185">Reference proteome</keyword>
<keyword id="KW-0788">Thiol protease</keyword>
<keyword id="KW-0833">Ubl conjugation pathway</keyword>